<dbReference type="EMBL" id="X67119">
    <property type="protein sequence ID" value="CAA47585.1"/>
    <property type="molecule type" value="Genomic_DNA"/>
</dbReference>
<dbReference type="EMBL" id="S55844">
    <property type="protein sequence ID" value="AAB24682.1"/>
    <property type="molecule type" value="Genomic_DNA"/>
</dbReference>
<dbReference type="EMBL" id="X69198">
    <property type="protein sequence ID" value="CAA49027.1"/>
    <property type="molecule type" value="Genomic_DNA"/>
</dbReference>
<dbReference type="PIR" id="S33100">
    <property type="entry name" value="S33100"/>
</dbReference>
<dbReference type="RefSeq" id="NP_042130.1">
    <property type="nucleotide sequence ID" value="NC_001611.1"/>
</dbReference>
<dbReference type="SMR" id="P33059"/>
<dbReference type="GeneID" id="1486441"/>
<dbReference type="KEGG" id="vg:1486441"/>
<dbReference type="Proteomes" id="UP000002060">
    <property type="component" value="Segment"/>
</dbReference>
<dbReference type="GO" id="GO:0016020">
    <property type="term" value="C:membrane"/>
    <property type="evidence" value="ECO:0007669"/>
    <property type="project" value="UniProtKB-KW"/>
</dbReference>
<dbReference type="GO" id="GO:0019031">
    <property type="term" value="C:viral envelope"/>
    <property type="evidence" value="ECO:0007669"/>
    <property type="project" value="UniProtKB-KW"/>
</dbReference>
<dbReference type="GO" id="GO:0055036">
    <property type="term" value="C:virion membrane"/>
    <property type="evidence" value="ECO:0007669"/>
    <property type="project" value="UniProtKB-SubCell"/>
</dbReference>
<dbReference type="GO" id="GO:0046718">
    <property type="term" value="P:symbiont entry into host cell"/>
    <property type="evidence" value="ECO:0007669"/>
    <property type="project" value="UniProtKB-KW"/>
</dbReference>
<dbReference type="GO" id="GO:0019062">
    <property type="term" value="P:virion attachment to host cell"/>
    <property type="evidence" value="ECO:0007669"/>
    <property type="project" value="UniProtKB-KW"/>
</dbReference>
<dbReference type="InterPro" id="IPR004900">
    <property type="entry name" value="Poxvirus_P35"/>
</dbReference>
<dbReference type="Pfam" id="PF03213">
    <property type="entry name" value="Pox_P35"/>
    <property type="match status" value="1"/>
</dbReference>
<sequence>MATVNKTPVIVVPVIDRPPSETFPNLHEHINDQKFDDVKDNEVMPEKRNVVIVKDDPDHYKDYAFIHWTGGNIRNDDKYTHFFSGFCNTMCTEETKRNIARHLALWDSKFFTELENKKVEYVVIVENDNVIEDITFLRPVLKAMHDKKIDILQMREIITGNKVKTELVMDKNHVIFTYTGGYDVSLSAYIIRVTTALNIVDEIIKSGGLSSGFYFEIARIENEIKINRQIMDNSAKYVEHDPRLVAEHRFENMKPNFWSRIGTAAVKRYPGVMYAFTTPLISFFGLFDINVIGLIVILFIMFMLIFNVKSKLLWFLTGTFVTAFI</sequence>
<keyword id="KW-0945">Host-virus interaction</keyword>
<keyword id="KW-0426">Late protein</keyword>
<keyword id="KW-0472">Membrane</keyword>
<keyword id="KW-1185">Reference proteome</keyword>
<keyword id="KW-0735">Signal-anchor</keyword>
<keyword id="KW-0812">Transmembrane</keyword>
<keyword id="KW-1133">Transmembrane helix</keyword>
<keyword id="KW-1161">Viral attachment to host cell</keyword>
<keyword id="KW-0261">Viral envelope protein</keyword>
<keyword id="KW-0946">Virion</keyword>
<keyword id="KW-1160">Virus entry into host cell</keyword>
<organism>
    <name type="scientific">Variola virus (isolate Human/India/Ind3/1967)</name>
    <name type="common">VARV</name>
    <name type="synonym">Smallpox virus</name>
    <dbReference type="NCBI Taxonomy" id="587200"/>
    <lineage>
        <taxon>Viruses</taxon>
        <taxon>Varidnaviria</taxon>
        <taxon>Bamfordvirae</taxon>
        <taxon>Nucleocytoviricota</taxon>
        <taxon>Pokkesviricetes</taxon>
        <taxon>Chitovirales</taxon>
        <taxon>Poxviridae</taxon>
        <taxon>Chordopoxvirinae</taxon>
        <taxon>Orthopoxvirus</taxon>
        <taxon>Variola virus</taxon>
    </lineage>
</organism>
<proteinExistence type="evidence at transcript level"/>
<feature type="chain" id="PRO_0000099209" description="Envelope protein H3">
    <location>
        <begin position="1"/>
        <end position="325"/>
    </location>
</feature>
<feature type="topological domain" description="Virion surface" evidence="3">
    <location>
        <begin position="1"/>
        <end position="285"/>
    </location>
</feature>
<feature type="transmembrane region" description="Helical; Signal-anchor" evidence="4">
    <location>
        <begin position="286"/>
        <end position="306"/>
    </location>
</feature>
<feature type="topological domain" description="Intravirion" evidence="3">
    <location>
        <begin position="307"/>
        <end position="325"/>
    </location>
</feature>
<reference key="1">
    <citation type="journal article" date="1993" name="Virus Res.">
        <title>Nucleotide sequence analysis of variola virus HindIII M, L, I genome fragments.</title>
        <authorList>
            <person name="Shchelkunov S.N."/>
            <person name="Blinov V.M."/>
            <person name="Totmenin A.V."/>
            <person name="Marennikova S.S."/>
            <person name="Kolykhalov A.A."/>
            <person name="Frolov I.V."/>
            <person name="Chizhikov V.E."/>
            <person name="Gytorov V.V."/>
            <person name="Gashikov P.V."/>
            <person name="Belanov E.F."/>
            <person name="Belavin P.A."/>
            <person name="Resenchuk S.M."/>
            <person name="Andzhaparidze O.G."/>
            <person name="Sandakhchiev L.S."/>
        </authorList>
    </citation>
    <scope>NUCLEOTIDE SEQUENCE [GENOMIC DNA]</scope>
</reference>
<reference key="2">
    <citation type="journal article" date="1993" name="FEBS Lett.">
        <title>Genes of variola and vaccinia viruses necessary to overcome the host protective mechanisms.</title>
        <authorList>
            <person name="Shchelkunov S.N."/>
            <person name="Blinov V.M."/>
            <person name="Sandakhchiev L.S."/>
        </authorList>
    </citation>
    <scope>NUCLEOTIDE SEQUENCE [LARGE SCALE GENOMIC DNA]</scope>
</reference>
<name>PG108_VAR67</name>
<organismHost>
    <name type="scientific">Homo sapiens</name>
    <name type="common">Human</name>
    <dbReference type="NCBI Taxonomy" id="9606"/>
</organismHost>
<gene>
    <name type="primary">OPG108</name>
    <name type="ORF">H3L</name>
    <name type="ORF">I3L</name>
</gene>
<evidence type="ECO:0000250" key="1"/>
<evidence type="ECO:0000250" key="2">
    <source>
        <dbReference type="UniProtKB" id="P07240"/>
    </source>
</evidence>
<evidence type="ECO:0000255" key="3"/>
<evidence type="ECO:0000305" key="4"/>
<accession>P33059</accession>
<protein>
    <recommendedName>
        <fullName>Envelope protein H3</fullName>
    </recommendedName>
    <alternativeName>
        <fullName>Ag35</fullName>
    </alternativeName>
    <alternativeName>
        <fullName>Virion envelope protein p35</fullName>
    </alternativeName>
</protein>
<comment type="function">
    <text evidence="1 2">Envelope protein that binds to heparan sulfate on the cell surface and might provide virion attachment to target cell.</text>
</comment>
<comment type="subcellular location">
    <subcellularLocation>
        <location evidence="2">Virion membrane</location>
        <topology evidence="2">Single-pass membrane protein</topology>
    </subcellularLocation>
    <text evidence="2">Component of the mature virion (MV) membrane. Becomes membrane associated presumably during virus maturation. The mature virion is located in the cytoplasm of infected cells and is probably released by cell lysis.</text>
</comment>
<comment type="induction">
    <text>Expressed in the late phase of the viral replicative cycle.</text>
</comment>
<comment type="PTM">
    <text evidence="2">Does not contain disulfide bonds.</text>
</comment>
<comment type="miscellaneous">
    <text evidence="1">Immunodominant protein.</text>
</comment>
<comment type="similarity">
    <text evidence="4">Belongs to the orthopoxvirus OPG108 family.</text>
</comment>